<gene>
    <name type="ordered locus">VIBHAR_03621</name>
</gene>
<evidence type="ECO:0000255" key="1">
    <source>
        <dbReference type="HAMAP-Rule" id="MF_01246"/>
    </source>
</evidence>
<comment type="function">
    <text evidence="1">Probably catalyzes the deacetylation of acetylated carbohydrates an important step in the degradation of oligosaccharides.</text>
</comment>
<comment type="cofactor">
    <cofactor evidence="1">
        <name>Mg(2+)</name>
        <dbReference type="ChEBI" id="CHEBI:18420"/>
    </cofactor>
</comment>
<comment type="subunit">
    <text evidence="1">Homodimer.</text>
</comment>
<comment type="similarity">
    <text evidence="1">Belongs to the YdjC deacetylase family.</text>
</comment>
<feature type="chain" id="PRO_1000067090" description="Carbohydrate deacetylase">
    <location>
        <begin position="1"/>
        <end position="251"/>
    </location>
</feature>
<feature type="binding site" evidence="1">
    <location>
        <position position="59"/>
    </location>
    <ligand>
        <name>Mg(2+)</name>
        <dbReference type="ChEBI" id="CHEBI:18420"/>
    </ligand>
</feature>
<feature type="binding site" evidence="1">
    <location>
        <position position="122"/>
    </location>
    <ligand>
        <name>Mg(2+)</name>
        <dbReference type="ChEBI" id="CHEBI:18420"/>
    </ligand>
</feature>
<proteinExistence type="inferred from homology"/>
<organism>
    <name type="scientific">Vibrio campbellii (strain ATCC BAA-1116)</name>
    <dbReference type="NCBI Taxonomy" id="2902295"/>
    <lineage>
        <taxon>Bacteria</taxon>
        <taxon>Pseudomonadati</taxon>
        <taxon>Pseudomonadota</taxon>
        <taxon>Gammaproteobacteria</taxon>
        <taxon>Vibrionales</taxon>
        <taxon>Vibrionaceae</taxon>
        <taxon>Vibrio</taxon>
    </lineage>
</organism>
<reference key="1">
    <citation type="submission" date="2007-08" db="EMBL/GenBank/DDBJ databases">
        <authorList>
            <consortium name="The Vibrio harveyi Genome Sequencing Project"/>
            <person name="Bassler B."/>
            <person name="Clifton S.W."/>
            <person name="Fulton L."/>
            <person name="Delehaunty K."/>
            <person name="Fronick C."/>
            <person name="Harrison M."/>
            <person name="Markivic C."/>
            <person name="Fulton R."/>
            <person name="Tin-Wollam A.-M."/>
            <person name="Shah N."/>
            <person name="Pepin K."/>
            <person name="Nash W."/>
            <person name="Thiruvilangam P."/>
            <person name="Bhonagiri V."/>
            <person name="Waters C."/>
            <person name="Tu K.C."/>
            <person name="Irgon J."/>
            <person name="Wilson R.K."/>
        </authorList>
    </citation>
    <scope>NUCLEOTIDE SEQUENCE [LARGE SCALE GENOMIC DNA]</scope>
    <source>
        <strain>ATCC BAA-1116 / BB120</strain>
    </source>
</reference>
<name>YDJC_VIBC1</name>
<keyword id="KW-0119">Carbohydrate metabolism</keyword>
<keyword id="KW-0378">Hydrolase</keyword>
<keyword id="KW-0460">Magnesium</keyword>
<keyword id="KW-0479">Metal-binding</keyword>
<protein>
    <recommendedName>
        <fullName evidence="1">Carbohydrate deacetylase</fullName>
        <ecNumber evidence="1">3.5.1.-</ecNumber>
    </recommendedName>
</protein>
<sequence length="251" mass="28080">MKVIFNADDFGLTQGVNNGIIKAHQQGVVLSTTMMMGMDAEQHAVELANQNPNLKIGVHLRFTAGNPLTGHPNLTGGGEQFVRFNELWKKRDFQEEAVYQEAVAQVERFLSLGLPLSHIDSHHHAHTHPQLLPVIRRVAEQYRVPLRGSGLCHIDCDTTYHFTDEFYDQGVSLDGVMAHLKSLKSQYDVVEVMCHPADVDQHLLSISGYALLRELELQVLTSPILKQELAEHGMSITDYSTLISTRKFASV</sequence>
<dbReference type="EC" id="3.5.1.-" evidence="1"/>
<dbReference type="EMBL" id="CP000789">
    <property type="protein sequence ID" value="ABU72536.1"/>
    <property type="molecule type" value="Genomic_DNA"/>
</dbReference>
<dbReference type="RefSeq" id="WP_012128955.1">
    <property type="nucleotide sequence ID" value="NC_009783.1"/>
</dbReference>
<dbReference type="SMR" id="A7MTM7"/>
<dbReference type="KEGG" id="vha:VIBHAR_03621"/>
<dbReference type="PATRIC" id="fig|338187.25.peg.2611"/>
<dbReference type="Proteomes" id="UP000008152">
    <property type="component" value="Chromosome I"/>
</dbReference>
<dbReference type="GO" id="GO:0019213">
    <property type="term" value="F:deacetylase activity"/>
    <property type="evidence" value="ECO:0007669"/>
    <property type="project" value="TreeGrafter"/>
</dbReference>
<dbReference type="GO" id="GO:0016811">
    <property type="term" value="F:hydrolase activity, acting on carbon-nitrogen (but not peptide) bonds, in linear amides"/>
    <property type="evidence" value="ECO:0007669"/>
    <property type="project" value="UniProtKB-UniRule"/>
</dbReference>
<dbReference type="GO" id="GO:0046872">
    <property type="term" value="F:metal ion binding"/>
    <property type="evidence" value="ECO:0007669"/>
    <property type="project" value="UniProtKB-KW"/>
</dbReference>
<dbReference type="GO" id="GO:0000272">
    <property type="term" value="P:polysaccharide catabolic process"/>
    <property type="evidence" value="ECO:0007669"/>
    <property type="project" value="InterPro"/>
</dbReference>
<dbReference type="CDD" id="cd10803">
    <property type="entry name" value="YdjC_EF3048_like"/>
    <property type="match status" value="1"/>
</dbReference>
<dbReference type="Gene3D" id="3.20.20.370">
    <property type="entry name" value="Glycoside hydrolase/deacetylase"/>
    <property type="match status" value="1"/>
</dbReference>
<dbReference type="HAMAP" id="MF_01246">
    <property type="entry name" value="COD"/>
    <property type="match status" value="1"/>
</dbReference>
<dbReference type="InterPro" id="IPR022948">
    <property type="entry name" value="COD_ChbG_bac"/>
</dbReference>
<dbReference type="InterPro" id="IPR011330">
    <property type="entry name" value="Glyco_hydro/deAcase_b/a-brl"/>
</dbReference>
<dbReference type="InterPro" id="IPR006879">
    <property type="entry name" value="YdjC-like"/>
</dbReference>
<dbReference type="NCBIfam" id="NF002559">
    <property type="entry name" value="PRK02134.1"/>
    <property type="match status" value="1"/>
</dbReference>
<dbReference type="PANTHER" id="PTHR31609:SF1">
    <property type="entry name" value="CARBOHYDRATE DEACETYLASE"/>
    <property type="match status" value="1"/>
</dbReference>
<dbReference type="PANTHER" id="PTHR31609">
    <property type="entry name" value="YDJC DEACETYLASE FAMILY MEMBER"/>
    <property type="match status" value="1"/>
</dbReference>
<dbReference type="Pfam" id="PF04794">
    <property type="entry name" value="YdjC"/>
    <property type="match status" value="1"/>
</dbReference>
<dbReference type="SUPFAM" id="SSF88713">
    <property type="entry name" value="Glycoside hydrolase/deacetylase"/>
    <property type="match status" value="1"/>
</dbReference>
<accession>A7MTM7</accession>